<organism evidence="7">
    <name type="scientific">Entamoeba histolytica (strain ATCC 30459 / HM-1:IMSS / ABRM)</name>
    <dbReference type="NCBI Taxonomy" id="294381"/>
    <lineage>
        <taxon>Eukaryota</taxon>
        <taxon>Amoebozoa</taxon>
        <taxon>Evosea</taxon>
        <taxon>Archamoebae</taxon>
        <taxon>Mastigamoebida</taxon>
        <taxon>Entamoebidae</taxon>
        <taxon>Entamoeba</taxon>
    </lineage>
</organism>
<proteinExistence type="inferred from homology"/>
<protein>
    <recommendedName>
        <fullName>Rho-related protein racB</fullName>
        <ecNumber evidence="2">3.6.5.2</ecNumber>
    </recommendedName>
</protein>
<name>RACB_ENTH1</name>
<accession>Q24815</accession>
<accession>A0A175JR52</accession>
<accession>C4M468</accession>
<evidence type="ECO:0000250" key="1">
    <source>
        <dbReference type="UniProtKB" id="P61585"/>
    </source>
</evidence>
<evidence type="ECO:0000250" key="2">
    <source>
        <dbReference type="UniProtKB" id="P63000"/>
    </source>
</evidence>
<evidence type="ECO:0000250" key="3">
    <source>
        <dbReference type="UniProtKB" id="Q24816"/>
    </source>
</evidence>
<evidence type="ECO:0000303" key="4">
    <source>
    </source>
</evidence>
<evidence type="ECO:0000305" key="5"/>
<evidence type="ECO:0000312" key="6">
    <source>
        <dbReference type="EMBL" id="AAC47297.1"/>
    </source>
</evidence>
<evidence type="ECO:0000312" key="7">
    <source>
        <dbReference type="EMBL" id="EAL51362.1"/>
    </source>
</evidence>
<keyword id="KW-1003">Cell membrane</keyword>
<keyword id="KW-0963">Cytoplasm</keyword>
<keyword id="KW-0206">Cytoskeleton</keyword>
<keyword id="KW-0342">GTP-binding</keyword>
<keyword id="KW-0378">Hydrolase</keyword>
<keyword id="KW-0449">Lipoprotein</keyword>
<keyword id="KW-0460">Magnesium</keyword>
<keyword id="KW-0472">Membrane</keyword>
<keyword id="KW-0479">Metal-binding</keyword>
<keyword id="KW-0488">Methylation</keyword>
<keyword id="KW-0547">Nucleotide-binding</keyword>
<keyword id="KW-0636">Prenylation</keyword>
<keyword id="KW-1185">Reference proteome</keyword>
<comment type="function">
    <text evidence="2">Small GTPase which cycles between active GTP-bound and inactive GDP-bound states.</text>
</comment>
<comment type="catalytic activity">
    <reaction evidence="2">
        <text>GTP + H2O = GDP + phosphate + H(+)</text>
        <dbReference type="Rhea" id="RHEA:19669"/>
        <dbReference type="ChEBI" id="CHEBI:15377"/>
        <dbReference type="ChEBI" id="CHEBI:15378"/>
        <dbReference type="ChEBI" id="CHEBI:37565"/>
        <dbReference type="ChEBI" id="CHEBI:43474"/>
        <dbReference type="ChEBI" id="CHEBI:58189"/>
        <dbReference type="EC" id="3.6.5.2"/>
    </reaction>
    <physiologicalReaction direction="left-to-right" evidence="2">
        <dbReference type="Rhea" id="RHEA:19670"/>
    </physiologicalReaction>
</comment>
<comment type="cofactor">
    <cofactor evidence="3">
        <name>Mg(2+)</name>
        <dbReference type="ChEBI" id="CHEBI:18420"/>
    </cofactor>
</comment>
<comment type="activity regulation">
    <text evidence="2">Regulated by guanine nucleotide exchange factors (GEFs) which promote the exchange of bound GDP for free GTP, GTPase activating proteins (GAPs) which increase the GTP hydrolysis activity, and GDP dissociation inhibitors which inhibit the dissociation of the nucleotide from the GTPase.</text>
</comment>
<comment type="subcellular location">
    <subcellularLocation>
        <location evidence="2">Cell membrane</location>
        <topology evidence="2">Lipid-anchor</topology>
        <orientation evidence="2">Cytoplasmic side</orientation>
    </subcellularLocation>
    <subcellularLocation>
        <location evidence="2">Cytoplasm</location>
        <location evidence="2">Cytoskeleton</location>
    </subcellularLocation>
    <subcellularLocation>
        <location evidence="2">Cytoplasm</location>
    </subcellularLocation>
</comment>
<comment type="domain">
    <text evidence="3">The switch 1 and switch 2 motifs undergo large conformational changes during GTP/GDP cycle and play important roles in the interaction with downstream effectors.</text>
</comment>
<comment type="similarity">
    <text evidence="5">Belongs to the small GTPase superfamily. Rho family.</text>
</comment>
<feature type="chain" id="PRO_0000198911" description="Rho-related protein racB">
    <location>
        <begin position="1"/>
        <end position="193"/>
    </location>
</feature>
<feature type="propeptide" id="PRO_0000457562" description="Removed in mature form" evidence="2">
    <location>
        <begin position="191"/>
        <end position="193"/>
    </location>
</feature>
<feature type="short sequence motif" description="Switch 1" evidence="3">
    <location>
        <begin position="26"/>
        <end position="37"/>
    </location>
</feature>
<feature type="short sequence motif" description="Switch 2" evidence="3">
    <location>
        <begin position="57"/>
        <end position="75"/>
    </location>
</feature>
<feature type="binding site" evidence="3">
    <location>
        <position position="13"/>
    </location>
    <ligand>
        <name>GTP</name>
        <dbReference type="ChEBI" id="CHEBI:37565"/>
    </ligand>
</feature>
<feature type="binding site" evidence="3">
    <location>
        <position position="15"/>
    </location>
    <ligand>
        <name>GTP</name>
        <dbReference type="ChEBI" id="CHEBI:37565"/>
    </ligand>
</feature>
<feature type="binding site" evidence="3">
    <location>
        <position position="16"/>
    </location>
    <ligand>
        <name>GTP</name>
        <dbReference type="ChEBI" id="CHEBI:37565"/>
    </ligand>
</feature>
<feature type="binding site" evidence="3">
    <location>
        <position position="17"/>
    </location>
    <ligand>
        <name>GTP</name>
        <dbReference type="ChEBI" id="CHEBI:37565"/>
    </ligand>
</feature>
<feature type="binding site" evidence="3">
    <location>
        <position position="17"/>
    </location>
    <ligand>
        <name>Mg(2+)</name>
        <dbReference type="ChEBI" id="CHEBI:18420"/>
    </ligand>
</feature>
<feature type="binding site" evidence="3">
    <location>
        <position position="18"/>
    </location>
    <ligand>
        <name>GTP</name>
        <dbReference type="ChEBI" id="CHEBI:37565"/>
    </ligand>
</feature>
<feature type="binding site" evidence="3">
    <location>
        <position position="32"/>
    </location>
    <ligand>
        <name>GTP</name>
        <dbReference type="ChEBI" id="CHEBI:37565"/>
    </ligand>
</feature>
<feature type="binding site" evidence="3">
    <location>
        <position position="35"/>
    </location>
    <ligand>
        <name>GTP</name>
        <dbReference type="ChEBI" id="CHEBI:37565"/>
    </ligand>
</feature>
<feature type="binding site" evidence="3">
    <location>
        <position position="35"/>
    </location>
    <ligand>
        <name>Mg(2+)</name>
        <dbReference type="ChEBI" id="CHEBI:18420"/>
    </ligand>
</feature>
<feature type="binding site" evidence="3">
    <location>
        <position position="60"/>
    </location>
    <ligand>
        <name>GTP</name>
        <dbReference type="ChEBI" id="CHEBI:37565"/>
    </ligand>
</feature>
<feature type="binding site" evidence="3">
    <location>
        <position position="116"/>
    </location>
    <ligand>
        <name>GTP</name>
        <dbReference type="ChEBI" id="CHEBI:37565"/>
    </ligand>
</feature>
<feature type="binding site" evidence="3">
    <location>
        <position position="118"/>
    </location>
    <ligand>
        <name>GTP</name>
        <dbReference type="ChEBI" id="CHEBI:37565"/>
    </ligand>
</feature>
<feature type="binding site" evidence="3">
    <location>
        <position position="159"/>
    </location>
    <ligand>
        <name>GTP</name>
        <dbReference type="ChEBI" id="CHEBI:37565"/>
    </ligand>
</feature>
<feature type="modified residue" description="Cysteine methyl ester" evidence="1">
    <location>
        <position position="190"/>
    </location>
</feature>
<feature type="lipid moiety-binding region" description="S-geranylgeranyl cysteine" evidence="2">
    <location>
        <position position="190"/>
    </location>
</feature>
<feature type="sequence conflict" description="In Ref. 2; AAC47297." evidence="5" ref="2">
    <original>D</original>
    <variation>A</variation>
    <location>
        <position position="11"/>
    </location>
</feature>
<feature type="sequence conflict" description="In Ref. 2; AAC47297." evidence="5" ref="2">
    <original>A</original>
    <variation>G</variation>
    <location>
        <position position="13"/>
    </location>
</feature>
<sequence>MQSVKCVIVGDGAVGKTCLLVSYTTNAFPTEYVPTVFDNYSATVMVDSRPINLGLWDTAGQEDYDRIRPLSYPQTDVFLLCFSVVSPPSFENISSKWKPEVSHHCPNAPCLLIGTKIDIRDEQTQTNKTCDKKIEPITSEQGEAKCKDIGALKYIECSALTQKNLRYVFDEAVRAVININKKEKIKRKSCLIF</sequence>
<reference evidence="7" key="1">
    <citation type="journal article" date="2005" name="Nature">
        <title>The genome of the protist parasite Entamoeba histolytica.</title>
        <authorList>
            <person name="Loftus B.J."/>
            <person name="Anderson I."/>
            <person name="Davies R."/>
            <person name="Alsmark U.C."/>
            <person name="Samuelson J."/>
            <person name="Amedeo P."/>
            <person name="Roncaglia P."/>
            <person name="Berriman M."/>
            <person name="Hirt R.P."/>
            <person name="Mann B.J."/>
            <person name="Nozaki T."/>
            <person name="Suh B."/>
            <person name="Pop M."/>
            <person name="Duchene M."/>
            <person name="Ackers J."/>
            <person name="Tannich E."/>
            <person name="Leippe M."/>
            <person name="Hofer M."/>
            <person name="Bruchhaus I."/>
            <person name="Willhoeft U."/>
            <person name="Bhattacharya A."/>
            <person name="Chillingworth T."/>
            <person name="Churcher C.M."/>
            <person name="Hance Z."/>
            <person name="Harris B."/>
            <person name="Harris D."/>
            <person name="Jagels K."/>
            <person name="Moule S."/>
            <person name="Mungall K.L."/>
            <person name="Ormond D."/>
            <person name="Squares R."/>
            <person name="Whitehead S."/>
            <person name="Quail M.A."/>
            <person name="Rabbinowitsch E."/>
            <person name="Norbertczak H."/>
            <person name="Price C."/>
            <person name="Wang Z."/>
            <person name="Guillen N."/>
            <person name="Gilchrist C."/>
            <person name="Stroup S.E."/>
            <person name="Bhattacharya S."/>
            <person name="Lohia A."/>
            <person name="Foster P.G."/>
            <person name="Sicheritz-Ponten T."/>
            <person name="Weber C."/>
            <person name="Singh U."/>
            <person name="Mukherjee C."/>
            <person name="El-Sayed N.M.A."/>
            <person name="Petri W.A."/>
            <person name="Clark C.G."/>
            <person name="Embley T.M."/>
            <person name="Barrell B.G."/>
            <person name="Fraser C.M."/>
            <person name="Hall N."/>
        </authorList>
    </citation>
    <scope>NUCLEOTIDE SEQUENCE [LARGE SCALE GENOMIC DNA]</scope>
    <source>
        <strain evidence="7">ATCC 30459 / HM-1:IMSS / ABRM</strain>
    </source>
</reference>
<reference evidence="6" key="2">
    <citation type="journal article" date="1996" name="Gene">
        <title>Heterogeneity of Entamoeba histolytica rac genes encoding p21rac homologues.</title>
        <authorList>
            <person name="Lohia A."/>
            <person name="Samuelson J."/>
        </authorList>
    </citation>
    <scope>NUCLEOTIDE SEQUENCE [GENOMIC DNA] OF 10-172</scope>
    <source>
        <strain evidence="6">ATCC 30459 / HM-1:IMSS / ABRM</strain>
    </source>
</reference>
<gene>
    <name evidence="4" type="primary">RACB</name>
    <name evidence="7" type="ORF">EHI_140190</name>
</gene>
<dbReference type="EC" id="3.6.5.2" evidence="2"/>
<dbReference type="EMBL" id="DS571254">
    <property type="protein sequence ID" value="EAL51362.1"/>
    <property type="molecule type" value="Genomic_DNA"/>
</dbReference>
<dbReference type="EMBL" id="U29721">
    <property type="protein sequence ID" value="AAC47297.1"/>
    <property type="molecule type" value="Genomic_DNA"/>
</dbReference>
<dbReference type="PIR" id="PC4200">
    <property type="entry name" value="PC4200"/>
</dbReference>
<dbReference type="RefSeq" id="XP_656745.1">
    <property type="nucleotide sequence ID" value="XM_651653.1"/>
</dbReference>
<dbReference type="SMR" id="Q24815"/>
<dbReference type="STRING" id="5759.C4M468"/>
<dbReference type="EnsemblProtists" id="GAT96147">
    <property type="protein sequence ID" value="GAT96147"/>
    <property type="gene ID" value="CL6EHI_140190"/>
</dbReference>
<dbReference type="EnsemblProtists" id="rna_EHI_140190-1">
    <property type="protein sequence ID" value="rna_EHI_140190-1"/>
    <property type="gene ID" value="EHI_140190"/>
</dbReference>
<dbReference type="GeneID" id="3411063"/>
<dbReference type="KEGG" id="ehi:EHI_140190"/>
<dbReference type="VEuPathDB" id="AmoebaDB:EHI5A_045250"/>
<dbReference type="VEuPathDB" id="AmoebaDB:EHI7A_023430"/>
<dbReference type="VEuPathDB" id="AmoebaDB:EHI8A_021070"/>
<dbReference type="VEuPathDB" id="AmoebaDB:EHI_140190"/>
<dbReference type="VEuPathDB" id="AmoebaDB:KM1_052920"/>
<dbReference type="eggNOG" id="KOG0393">
    <property type="taxonomic scope" value="Eukaryota"/>
</dbReference>
<dbReference type="HOGENOM" id="CLU_041217_21_3_1"/>
<dbReference type="OMA" id="PFCDVFL"/>
<dbReference type="OrthoDB" id="8830751at2759"/>
<dbReference type="Proteomes" id="UP000001926">
    <property type="component" value="Partially assembled WGS sequence"/>
</dbReference>
<dbReference type="GO" id="GO:0042995">
    <property type="term" value="C:cell projection"/>
    <property type="evidence" value="ECO:0000318"/>
    <property type="project" value="GO_Central"/>
</dbReference>
<dbReference type="GO" id="GO:0031410">
    <property type="term" value="C:cytoplasmic vesicle"/>
    <property type="evidence" value="ECO:0000318"/>
    <property type="project" value="GO_Central"/>
</dbReference>
<dbReference type="GO" id="GO:0005856">
    <property type="term" value="C:cytoskeleton"/>
    <property type="evidence" value="ECO:0000318"/>
    <property type="project" value="GO_Central"/>
</dbReference>
<dbReference type="GO" id="GO:0005886">
    <property type="term" value="C:plasma membrane"/>
    <property type="evidence" value="ECO:0000318"/>
    <property type="project" value="GO_Central"/>
</dbReference>
<dbReference type="GO" id="GO:0005525">
    <property type="term" value="F:GTP binding"/>
    <property type="evidence" value="ECO:0000318"/>
    <property type="project" value="GO_Central"/>
</dbReference>
<dbReference type="GO" id="GO:0003924">
    <property type="term" value="F:GTPase activity"/>
    <property type="evidence" value="ECO:0000318"/>
    <property type="project" value="GO_Central"/>
</dbReference>
<dbReference type="GO" id="GO:0046872">
    <property type="term" value="F:metal ion binding"/>
    <property type="evidence" value="ECO:0007669"/>
    <property type="project" value="UniProtKB-KW"/>
</dbReference>
<dbReference type="GO" id="GO:0019901">
    <property type="term" value="F:protein kinase binding"/>
    <property type="evidence" value="ECO:0000318"/>
    <property type="project" value="GO_Central"/>
</dbReference>
<dbReference type="GO" id="GO:0007015">
    <property type="term" value="P:actin filament organization"/>
    <property type="evidence" value="ECO:0000318"/>
    <property type="project" value="GO_Central"/>
</dbReference>
<dbReference type="GO" id="GO:0030865">
    <property type="term" value="P:cortical cytoskeleton organization"/>
    <property type="evidence" value="ECO:0000318"/>
    <property type="project" value="GO_Central"/>
</dbReference>
<dbReference type="GO" id="GO:0007163">
    <property type="term" value="P:establishment or maintenance of cell polarity"/>
    <property type="evidence" value="ECO:0000318"/>
    <property type="project" value="GO_Central"/>
</dbReference>
<dbReference type="GO" id="GO:0000281">
    <property type="term" value="P:mitotic cytokinesis"/>
    <property type="evidence" value="ECO:0000318"/>
    <property type="project" value="GO_Central"/>
</dbReference>
<dbReference type="GO" id="GO:0032956">
    <property type="term" value="P:regulation of actin cytoskeleton organization"/>
    <property type="evidence" value="ECO:0000318"/>
    <property type="project" value="GO_Central"/>
</dbReference>
<dbReference type="GO" id="GO:0008360">
    <property type="term" value="P:regulation of cell shape"/>
    <property type="evidence" value="ECO:0000318"/>
    <property type="project" value="GO_Central"/>
</dbReference>
<dbReference type="GO" id="GO:0007165">
    <property type="term" value="P:signal transduction"/>
    <property type="evidence" value="ECO:0000318"/>
    <property type="project" value="GO_Central"/>
</dbReference>
<dbReference type="GO" id="GO:0007264">
    <property type="term" value="P:small GTPase-mediated signal transduction"/>
    <property type="evidence" value="ECO:0007669"/>
    <property type="project" value="InterPro"/>
</dbReference>
<dbReference type="FunFam" id="3.40.50.300:FF:000118">
    <property type="entry name" value="Rho-related GTP-binding protein RhoG"/>
    <property type="match status" value="1"/>
</dbReference>
<dbReference type="Gene3D" id="3.40.50.300">
    <property type="entry name" value="P-loop containing nucleotide triphosphate hydrolases"/>
    <property type="match status" value="1"/>
</dbReference>
<dbReference type="InterPro" id="IPR027417">
    <property type="entry name" value="P-loop_NTPase"/>
</dbReference>
<dbReference type="InterPro" id="IPR005225">
    <property type="entry name" value="Small_GTP-bd"/>
</dbReference>
<dbReference type="InterPro" id="IPR001806">
    <property type="entry name" value="Small_GTPase"/>
</dbReference>
<dbReference type="InterPro" id="IPR003578">
    <property type="entry name" value="Small_GTPase_Rho"/>
</dbReference>
<dbReference type="NCBIfam" id="TIGR00231">
    <property type="entry name" value="small_GTP"/>
    <property type="match status" value="1"/>
</dbReference>
<dbReference type="PANTHER" id="PTHR24072">
    <property type="entry name" value="RHO FAMILY GTPASE"/>
    <property type="match status" value="1"/>
</dbReference>
<dbReference type="Pfam" id="PF00071">
    <property type="entry name" value="Ras"/>
    <property type="match status" value="1"/>
</dbReference>
<dbReference type="PRINTS" id="PR00449">
    <property type="entry name" value="RASTRNSFRMNG"/>
</dbReference>
<dbReference type="SMART" id="SM00175">
    <property type="entry name" value="RAB"/>
    <property type="match status" value="1"/>
</dbReference>
<dbReference type="SMART" id="SM00176">
    <property type="entry name" value="RAN"/>
    <property type="match status" value="1"/>
</dbReference>
<dbReference type="SMART" id="SM00173">
    <property type="entry name" value="RAS"/>
    <property type="match status" value="1"/>
</dbReference>
<dbReference type="SMART" id="SM00174">
    <property type="entry name" value="RHO"/>
    <property type="match status" value="1"/>
</dbReference>
<dbReference type="SUPFAM" id="SSF52540">
    <property type="entry name" value="P-loop containing nucleoside triphosphate hydrolases"/>
    <property type="match status" value="1"/>
</dbReference>
<dbReference type="PROSITE" id="PS51420">
    <property type="entry name" value="RHO"/>
    <property type="match status" value="1"/>
</dbReference>